<organism>
    <name type="scientific">Cytophaga hutchinsonii (strain ATCC 33406 / DSM 1761 / CIP 103989 / NBRC 15051 / NCIMB 9469 / D465)</name>
    <dbReference type="NCBI Taxonomy" id="269798"/>
    <lineage>
        <taxon>Bacteria</taxon>
        <taxon>Pseudomonadati</taxon>
        <taxon>Bacteroidota</taxon>
        <taxon>Cytophagia</taxon>
        <taxon>Cytophagales</taxon>
        <taxon>Cytophagaceae</taxon>
        <taxon>Cytophaga</taxon>
    </lineage>
</organism>
<reference key="1">
    <citation type="journal article" date="2007" name="Appl. Environ. Microbiol.">
        <title>Genome sequence of the cellulolytic gliding bacterium Cytophaga hutchinsonii.</title>
        <authorList>
            <person name="Xie G."/>
            <person name="Bruce D.C."/>
            <person name="Challacombe J.F."/>
            <person name="Chertkov O."/>
            <person name="Detter J.C."/>
            <person name="Gilna P."/>
            <person name="Han C.S."/>
            <person name="Lucas S."/>
            <person name="Misra M."/>
            <person name="Myers G.L."/>
            <person name="Richardson P."/>
            <person name="Tapia R."/>
            <person name="Thayer N."/>
            <person name="Thompson L.S."/>
            <person name="Brettin T.S."/>
            <person name="Henrissat B."/>
            <person name="Wilson D.B."/>
            <person name="McBride M.J."/>
        </authorList>
    </citation>
    <scope>NUCLEOTIDE SEQUENCE [LARGE SCALE GENOMIC DNA]</scope>
    <source>
        <strain>ATCC 33406 / DSM 1761 / JCM 20678 / CIP 103989 / IAM 12607 / NBRC 15051 / NCIMB 9469 / D465</strain>
    </source>
</reference>
<dbReference type="EC" id="7.1.1.-" evidence="1"/>
<dbReference type="EMBL" id="CP000383">
    <property type="protein sequence ID" value="ABG57798.1"/>
    <property type="molecule type" value="Genomic_DNA"/>
</dbReference>
<dbReference type="RefSeq" id="WP_041932144.1">
    <property type="nucleotide sequence ID" value="NC_008255.1"/>
</dbReference>
<dbReference type="SMR" id="Q11XR8"/>
<dbReference type="STRING" id="269798.CHU_0510"/>
<dbReference type="KEGG" id="chu:CHU_0510"/>
<dbReference type="eggNOG" id="COG0377">
    <property type="taxonomic scope" value="Bacteria"/>
</dbReference>
<dbReference type="HOGENOM" id="CLU_055737_7_3_10"/>
<dbReference type="OrthoDB" id="9786737at2"/>
<dbReference type="Proteomes" id="UP000001822">
    <property type="component" value="Chromosome"/>
</dbReference>
<dbReference type="GO" id="GO:0005886">
    <property type="term" value="C:plasma membrane"/>
    <property type="evidence" value="ECO:0007669"/>
    <property type="project" value="UniProtKB-SubCell"/>
</dbReference>
<dbReference type="GO" id="GO:0045271">
    <property type="term" value="C:respiratory chain complex I"/>
    <property type="evidence" value="ECO:0007669"/>
    <property type="project" value="TreeGrafter"/>
</dbReference>
<dbReference type="GO" id="GO:0051539">
    <property type="term" value="F:4 iron, 4 sulfur cluster binding"/>
    <property type="evidence" value="ECO:0007669"/>
    <property type="project" value="UniProtKB-KW"/>
</dbReference>
<dbReference type="GO" id="GO:0005506">
    <property type="term" value="F:iron ion binding"/>
    <property type="evidence" value="ECO:0007669"/>
    <property type="project" value="UniProtKB-UniRule"/>
</dbReference>
<dbReference type="GO" id="GO:0008137">
    <property type="term" value="F:NADH dehydrogenase (ubiquinone) activity"/>
    <property type="evidence" value="ECO:0007669"/>
    <property type="project" value="InterPro"/>
</dbReference>
<dbReference type="GO" id="GO:0050136">
    <property type="term" value="F:NADH:ubiquinone reductase (non-electrogenic) activity"/>
    <property type="evidence" value="ECO:0007669"/>
    <property type="project" value="UniProtKB-UniRule"/>
</dbReference>
<dbReference type="GO" id="GO:0048038">
    <property type="term" value="F:quinone binding"/>
    <property type="evidence" value="ECO:0007669"/>
    <property type="project" value="UniProtKB-KW"/>
</dbReference>
<dbReference type="GO" id="GO:0009060">
    <property type="term" value="P:aerobic respiration"/>
    <property type="evidence" value="ECO:0007669"/>
    <property type="project" value="TreeGrafter"/>
</dbReference>
<dbReference type="GO" id="GO:0015990">
    <property type="term" value="P:electron transport coupled proton transport"/>
    <property type="evidence" value="ECO:0007669"/>
    <property type="project" value="TreeGrafter"/>
</dbReference>
<dbReference type="FunFam" id="3.40.50.12280:FF:000002">
    <property type="entry name" value="NADH-quinone oxidoreductase subunit B"/>
    <property type="match status" value="1"/>
</dbReference>
<dbReference type="Gene3D" id="3.40.50.12280">
    <property type="match status" value="1"/>
</dbReference>
<dbReference type="HAMAP" id="MF_01356">
    <property type="entry name" value="NDH1_NuoB"/>
    <property type="match status" value="1"/>
</dbReference>
<dbReference type="InterPro" id="IPR006137">
    <property type="entry name" value="NADH_UbQ_OxRdtase-like_20kDa"/>
</dbReference>
<dbReference type="InterPro" id="IPR006138">
    <property type="entry name" value="NADH_UQ_OxRdtase_20Kd_su"/>
</dbReference>
<dbReference type="NCBIfam" id="TIGR01957">
    <property type="entry name" value="nuoB_fam"/>
    <property type="match status" value="1"/>
</dbReference>
<dbReference type="NCBIfam" id="NF005012">
    <property type="entry name" value="PRK06411.1"/>
    <property type="match status" value="1"/>
</dbReference>
<dbReference type="NCBIfam" id="NF011388">
    <property type="entry name" value="PRK14813.1"/>
    <property type="match status" value="1"/>
</dbReference>
<dbReference type="PANTHER" id="PTHR11995">
    <property type="entry name" value="NADH DEHYDROGENASE"/>
    <property type="match status" value="1"/>
</dbReference>
<dbReference type="PANTHER" id="PTHR11995:SF14">
    <property type="entry name" value="NADH DEHYDROGENASE [UBIQUINONE] IRON-SULFUR PROTEIN 7, MITOCHONDRIAL"/>
    <property type="match status" value="1"/>
</dbReference>
<dbReference type="Pfam" id="PF01058">
    <property type="entry name" value="Oxidored_q6"/>
    <property type="match status" value="1"/>
</dbReference>
<dbReference type="SUPFAM" id="SSF56770">
    <property type="entry name" value="HydA/Nqo6-like"/>
    <property type="match status" value="1"/>
</dbReference>
<dbReference type="PROSITE" id="PS01150">
    <property type="entry name" value="COMPLEX1_20K"/>
    <property type="match status" value="1"/>
</dbReference>
<feature type="chain" id="PRO_0000376190" description="NADH-quinone oxidoreductase subunit B 1">
    <location>
        <begin position="1"/>
        <end position="178"/>
    </location>
</feature>
<feature type="binding site" evidence="1">
    <location>
        <position position="39"/>
    </location>
    <ligand>
        <name>[4Fe-4S] cluster</name>
        <dbReference type="ChEBI" id="CHEBI:49883"/>
    </ligand>
</feature>
<feature type="binding site" evidence="1">
    <location>
        <position position="40"/>
    </location>
    <ligand>
        <name>[4Fe-4S] cluster</name>
        <dbReference type="ChEBI" id="CHEBI:49883"/>
    </ligand>
</feature>
<feature type="binding site" evidence="1">
    <location>
        <position position="104"/>
    </location>
    <ligand>
        <name>[4Fe-4S] cluster</name>
        <dbReference type="ChEBI" id="CHEBI:49883"/>
    </ligand>
</feature>
<feature type="binding site" evidence="1">
    <location>
        <position position="135"/>
    </location>
    <ligand>
        <name>[4Fe-4S] cluster</name>
        <dbReference type="ChEBI" id="CHEBI:49883"/>
    </ligand>
</feature>
<proteinExistence type="inferred from homology"/>
<protein>
    <recommendedName>
        <fullName evidence="1">NADH-quinone oxidoreductase subunit B 1</fullName>
        <ecNumber evidence="1">7.1.1.-</ecNumber>
    </recommendedName>
    <alternativeName>
        <fullName evidence="1">NADH dehydrogenase I subunit B 1</fullName>
    </alternativeName>
    <alternativeName>
        <fullName evidence="1">NDH-1 subunit B 1</fullName>
    </alternativeName>
</protein>
<gene>
    <name evidence="1" type="primary">nuoB1</name>
    <name type="ordered locus">CHU_0510</name>
</gene>
<sequence length="178" mass="19949">MSLLDHKFGQGGIVVSQLEDVLNWARLSSLFPMSFGLACCAIEMMQTFTSGYDLDRFGVIPRPSPRQSDVMIVAGTVTFKMADRIRRLYEQMPEPRYVISMGSCSNCGGPYWEHGYHVVKGVDRIVPVDIYVPGCPPRPEALIGGFLKLQEKIRKETLVAPKAVERFLETHAKEKNIA</sequence>
<keyword id="KW-0004">4Fe-4S</keyword>
<keyword id="KW-0997">Cell inner membrane</keyword>
<keyword id="KW-1003">Cell membrane</keyword>
<keyword id="KW-0408">Iron</keyword>
<keyword id="KW-0411">Iron-sulfur</keyword>
<keyword id="KW-0472">Membrane</keyword>
<keyword id="KW-0479">Metal-binding</keyword>
<keyword id="KW-0520">NAD</keyword>
<keyword id="KW-0874">Quinone</keyword>
<keyword id="KW-1185">Reference proteome</keyword>
<keyword id="KW-1278">Translocase</keyword>
<keyword id="KW-0813">Transport</keyword>
<accession>Q11XR8</accession>
<comment type="function">
    <text evidence="1">NDH-1 shuttles electrons from NADH, via FMN and iron-sulfur (Fe-S) centers, to quinones in the respiratory chain. The immediate electron acceptor for the enzyme in this species is believed to be a menaquinone. Couples the redox reaction to proton translocation (for every two electrons transferred, four hydrogen ions are translocated across the cytoplasmic membrane), and thus conserves the redox energy in a proton gradient.</text>
</comment>
<comment type="catalytic activity">
    <reaction evidence="1">
        <text>a quinone + NADH + 5 H(+)(in) = a quinol + NAD(+) + 4 H(+)(out)</text>
        <dbReference type="Rhea" id="RHEA:57888"/>
        <dbReference type="ChEBI" id="CHEBI:15378"/>
        <dbReference type="ChEBI" id="CHEBI:24646"/>
        <dbReference type="ChEBI" id="CHEBI:57540"/>
        <dbReference type="ChEBI" id="CHEBI:57945"/>
        <dbReference type="ChEBI" id="CHEBI:132124"/>
    </reaction>
</comment>
<comment type="cofactor">
    <cofactor evidence="1">
        <name>[4Fe-4S] cluster</name>
        <dbReference type="ChEBI" id="CHEBI:49883"/>
    </cofactor>
    <text evidence="1">Binds 1 [4Fe-4S] cluster.</text>
</comment>
<comment type="subunit">
    <text evidence="1">NDH-1 is composed of 14 different subunits. Subunits NuoB, C, D, E, F, and G constitute the peripheral sector of the complex.</text>
</comment>
<comment type="subcellular location">
    <subcellularLocation>
        <location evidence="1">Cell inner membrane</location>
        <topology evidence="1">Peripheral membrane protein</topology>
        <orientation evidence="1">Cytoplasmic side</orientation>
    </subcellularLocation>
</comment>
<comment type="similarity">
    <text evidence="1">Belongs to the complex I 20 kDa subunit family.</text>
</comment>
<name>NUOB1_CYTH3</name>
<evidence type="ECO:0000255" key="1">
    <source>
        <dbReference type="HAMAP-Rule" id="MF_01356"/>
    </source>
</evidence>